<feature type="chain" id="PRO_0000104794" description="Large ribosomal subunit protein uL15">
    <location>
        <begin position="1"/>
        <end position="161"/>
    </location>
</feature>
<feature type="region of interest" description="Disordered" evidence="2">
    <location>
        <begin position="1"/>
        <end position="43"/>
    </location>
</feature>
<feature type="compositionally biased region" description="Gly residues" evidence="2">
    <location>
        <begin position="21"/>
        <end position="37"/>
    </location>
</feature>
<proteinExistence type="evidence at protein level"/>
<evidence type="ECO:0000255" key="1">
    <source>
        <dbReference type="HAMAP-Rule" id="MF_01341"/>
    </source>
</evidence>
<evidence type="ECO:0000256" key="2">
    <source>
        <dbReference type="SAM" id="MobiDB-lite"/>
    </source>
</evidence>
<evidence type="ECO:0000269" key="3">
    <source>
    </source>
</evidence>
<evidence type="ECO:0000305" key="4"/>
<keyword id="KW-0687">Ribonucleoprotein</keyword>
<keyword id="KW-0689">Ribosomal protein</keyword>
<keyword id="KW-0694">RNA-binding</keyword>
<keyword id="KW-0699">rRNA-binding</keyword>
<dbReference type="EMBL" id="BX572603">
    <property type="protein sequence ID" value="CAE28672.1"/>
    <property type="molecule type" value="Genomic_DNA"/>
</dbReference>
<dbReference type="RefSeq" id="WP_011158776.1">
    <property type="nucleotide sequence ID" value="NZ_CP116810.1"/>
</dbReference>
<dbReference type="SMR" id="Q6N4V2"/>
<dbReference type="IntAct" id="Q6N4V2">
    <property type="interactions" value="1"/>
</dbReference>
<dbReference type="STRING" id="258594.RPA3231"/>
<dbReference type="GeneID" id="66894317"/>
<dbReference type="eggNOG" id="COG0200">
    <property type="taxonomic scope" value="Bacteria"/>
</dbReference>
<dbReference type="HOGENOM" id="CLU_055188_4_0_5"/>
<dbReference type="PhylomeDB" id="Q6N4V2"/>
<dbReference type="GO" id="GO:0022625">
    <property type="term" value="C:cytosolic large ribosomal subunit"/>
    <property type="evidence" value="ECO:0007669"/>
    <property type="project" value="TreeGrafter"/>
</dbReference>
<dbReference type="GO" id="GO:0019843">
    <property type="term" value="F:rRNA binding"/>
    <property type="evidence" value="ECO:0007669"/>
    <property type="project" value="UniProtKB-UniRule"/>
</dbReference>
<dbReference type="GO" id="GO:0003735">
    <property type="term" value="F:structural constituent of ribosome"/>
    <property type="evidence" value="ECO:0007669"/>
    <property type="project" value="InterPro"/>
</dbReference>
<dbReference type="GO" id="GO:0006412">
    <property type="term" value="P:translation"/>
    <property type="evidence" value="ECO:0007669"/>
    <property type="project" value="UniProtKB-UniRule"/>
</dbReference>
<dbReference type="Gene3D" id="3.100.10.10">
    <property type="match status" value="1"/>
</dbReference>
<dbReference type="HAMAP" id="MF_01341">
    <property type="entry name" value="Ribosomal_uL15"/>
    <property type="match status" value="1"/>
</dbReference>
<dbReference type="InterPro" id="IPR030878">
    <property type="entry name" value="Ribosomal_uL15"/>
</dbReference>
<dbReference type="InterPro" id="IPR021131">
    <property type="entry name" value="Ribosomal_uL15/eL18"/>
</dbReference>
<dbReference type="InterPro" id="IPR036227">
    <property type="entry name" value="Ribosomal_uL15/eL18_sf"/>
</dbReference>
<dbReference type="InterPro" id="IPR005749">
    <property type="entry name" value="Ribosomal_uL15_bac-type"/>
</dbReference>
<dbReference type="InterPro" id="IPR001196">
    <property type="entry name" value="Ribosomal_uL15_CS"/>
</dbReference>
<dbReference type="NCBIfam" id="TIGR01071">
    <property type="entry name" value="rplO_bact"/>
    <property type="match status" value="1"/>
</dbReference>
<dbReference type="PANTHER" id="PTHR12934">
    <property type="entry name" value="50S RIBOSOMAL PROTEIN L15"/>
    <property type="match status" value="1"/>
</dbReference>
<dbReference type="PANTHER" id="PTHR12934:SF11">
    <property type="entry name" value="LARGE RIBOSOMAL SUBUNIT PROTEIN UL15M"/>
    <property type="match status" value="1"/>
</dbReference>
<dbReference type="Pfam" id="PF00828">
    <property type="entry name" value="Ribosomal_L27A"/>
    <property type="match status" value="1"/>
</dbReference>
<dbReference type="SUPFAM" id="SSF52080">
    <property type="entry name" value="Ribosomal proteins L15p and L18e"/>
    <property type="match status" value="1"/>
</dbReference>
<dbReference type="PROSITE" id="PS00475">
    <property type="entry name" value="RIBOSOMAL_L15"/>
    <property type="match status" value="1"/>
</dbReference>
<organism>
    <name type="scientific">Rhodopseudomonas palustris (strain ATCC BAA-98 / CGA009)</name>
    <dbReference type="NCBI Taxonomy" id="258594"/>
    <lineage>
        <taxon>Bacteria</taxon>
        <taxon>Pseudomonadati</taxon>
        <taxon>Pseudomonadota</taxon>
        <taxon>Alphaproteobacteria</taxon>
        <taxon>Hyphomicrobiales</taxon>
        <taxon>Nitrobacteraceae</taxon>
        <taxon>Rhodopseudomonas</taxon>
    </lineage>
</organism>
<name>RL15_RHOPA</name>
<protein>
    <recommendedName>
        <fullName evidence="1">Large ribosomal subunit protein uL15</fullName>
    </recommendedName>
    <alternativeName>
        <fullName evidence="4">50S ribosomal protein L15</fullName>
    </alternativeName>
    <alternativeName>
        <fullName>RRP-L15</fullName>
    </alternativeName>
</protein>
<reference key="1">
    <citation type="journal article" date="2004" name="Nat. Biotechnol.">
        <title>Complete genome sequence of the metabolically versatile photosynthetic bacterium Rhodopseudomonas palustris.</title>
        <authorList>
            <person name="Larimer F.W."/>
            <person name="Chain P."/>
            <person name="Hauser L."/>
            <person name="Lamerdin J.E."/>
            <person name="Malfatti S."/>
            <person name="Do L."/>
            <person name="Land M.L."/>
            <person name="Pelletier D.A."/>
            <person name="Beatty J.T."/>
            <person name="Lang A.S."/>
            <person name="Tabita F.R."/>
            <person name="Gibson J.L."/>
            <person name="Hanson T.E."/>
            <person name="Bobst C."/>
            <person name="Torres y Torres J.L."/>
            <person name="Peres C."/>
            <person name="Harrison F.H."/>
            <person name="Gibson J."/>
            <person name="Harwood C.S."/>
        </authorList>
    </citation>
    <scope>NUCLEOTIDE SEQUENCE [LARGE SCALE GENOMIC DNA]</scope>
    <source>
        <strain>ATCC BAA-98 / CGA009</strain>
    </source>
</reference>
<reference key="2">
    <citation type="journal article" date="2004" name="J. Proteome Res.">
        <title>Characterization of the 70S ribosome from Rhodopseudomonas palustris using an integrated 'top-down' and 'bottom-up' mass spectrometric approach.</title>
        <authorList>
            <person name="Strader M.B."/>
            <person name="VerBerkmoes N.C."/>
            <person name="Tabb D.L."/>
            <person name="Connelly H.M."/>
            <person name="Barton J.W."/>
            <person name="Bruce B.D."/>
            <person name="Pelletier D.A."/>
            <person name="Davison B.H."/>
            <person name="Hettich R.L."/>
            <person name="Larimer F.W."/>
            <person name="Hurst G.B."/>
        </authorList>
    </citation>
    <scope>MASS SPECTROMETRY</scope>
    <source>
        <strain>ATCC BAA-98 / CGA009</strain>
    </source>
</reference>
<gene>
    <name evidence="1" type="primary">rplO</name>
    <name type="ordered locus">RPA3231</name>
</gene>
<comment type="function">
    <text evidence="1">Binds to the 23S rRNA.</text>
</comment>
<comment type="subunit">
    <text evidence="1">Part of the 50S ribosomal subunit.</text>
</comment>
<comment type="mass spectrometry"/>
<comment type="similarity">
    <text evidence="1">Belongs to the universal ribosomal protein uL15 family.</text>
</comment>
<sequence>MKLSEIADNVGSRKKRMRIGRGIGSGKGKTGGRGGKGQTARSGVRIKGFEGGQMPLHRRLPKRGFNNIFALEFAEVNLDRLQEAVDSKAIDAGKVVDAAALVEAGVLRRAKDGVRLLGRGELTAKLNIEVHGATKSAIAAVEKAGGSVKILAPKAEEGEAA</sequence>
<accession>Q6N4V2</accession>